<reference key="1">
    <citation type="journal article" date="2005" name="BMC Genomics">
        <title>Bacterial genome adaptation to niches: divergence of the potential virulence genes in three Burkholderia species of different survival strategies.</title>
        <authorList>
            <person name="Kim H.S."/>
            <person name="Schell M.A."/>
            <person name="Yu Y."/>
            <person name="Ulrich R.L."/>
            <person name="Sarria S.H."/>
            <person name="Nierman W.C."/>
            <person name="DeShazer D."/>
        </authorList>
    </citation>
    <scope>NUCLEOTIDE SEQUENCE [LARGE SCALE GENOMIC DNA]</scope>
    <source>
        <strain>ATCC 700388 / DSM 13276 / CCUG 48851 / CIP 106301 / E264</strain>
    </source>
</reference>
<proteinExistence type="inferred from homology"/>
<sequence length="296" mass="33052">MIIHPNFDPVAIHLGPLAVRWYGLMYLVGFILAIVVGRLRLKLPHVAAQGWSAKDIDDMMFYGVLGVVLGGRLGYVLFYKADYYFSHPLDIFRVWEGGMSFHGGFLGVTLAMALFAWQRKRHWLEVTDFVAPMVPTGLAAGRLGNFINGELWGRVTSPDAPWAMLFPGASRDDAAWLAAHQDIAAKWNLNEVFLAHQMLPRHPSQLYEIALEGIALFFVLWFFSRKPRPMGAISALFLIGYGAARFTVEFAREPDDFLGLLTFGLSMGQWLSLPMIVAGVLMMIWAYRRGGAAKAA</sequence>
<accession>Q2T0B4</accession>
<protein>
    <recommendedName>
        <fullName evidence="1">Phosphatidylglycerol--prolipoprotein diacylglyceryl transferase</fullName>
        <ecNumber evidence="1">2.5.1.145</ecNumber>
    </recommendedName>
</protein>
<feature type="chain" id="PRO_1000053406" description="Phosphatidylglycerol--prolipoprotein diacylglyceryl transferase">
    <location>
        <begin position="1"/>
        <end position="296"/>
    </location>
</feature>
<feature type="transmembrane region" description="Helical" evidence="1">
    <location>
        <begin position="17"/>
        <end position="37"/>
    </location>
</feature>
<feature type="transmembrane region" description="Helical" evidence="1">
    <location>
        <begin position="59"/>
        <end position="79"/>
    </location>
</feature>
<feature type="transmembrane region" description="Helical" evidence="1">
    <location>
        <begin position="97"/>
        <end position="117"/>
    </location>
</feature>
<feature type="transmembrane region" description="Helical" evidence="1">
    <location>
        <begin position="230"/>
        <end position="250"/>
    </location>
</feature>
<feature type="transmembrane region" description="Helical" evidence="1">
    <location>
        <begin position="265"/>
        <end position="285"/>
    </location>
</feature>
<feature type="binding site" evidence="1">
    <location>
        <position position="142"/>
    </location>
    <ligand>
        <name>a 1,2-diacyl-sn-glycero-3-phospho-(1'-sn-glycerol)</name>
        <dbReference type="ChEBI" id="CHEBI:64716"/>
    </ligand>
</feature>
<dbReference type="EC" id="2.5.1.145" evidence="1"/>
<dbReference type="EMBL" id="CP000086">
    <property type="protein sequence ID" value="ABC39256.1"/>
    <property type="molecule type" value="Genomic_DNA"/>
</dbReference>
<dbReference type="RefSeq" id="WP_009892511.1">
    <property type="nucleotide sequence ID" value="NZ_CP008785.1"/>
</dbReference>
<dbReference type="SMR" id="Q2T0B4"/>
<dbReference type="GeneID" id="45120585"/>
<dbReference type="KEGG" id="bte:BTH_I0829"/>
<dbReference type="HOGENOM" id="CLU_013386_1_0_4"/>
<dbReference type="UniPathway" id="UPA00664"/>
<dbReference type="Proteomes" id="UP000001930">
    <property type="component" value="Chromosome I"/>
</dbReference>
<dbReference type="GO" id="GO:0005886">
    <property type="term" value="C:plasma membrane"/>
    <property type="evidence" value="ECO:0007669"/>
    <property type="project" value="UniProtKB-SubCell"/>
</dbReference>
<dbReference type="GO" id="GO:0008961">
    <property type="term" value="F:phosphatidylglycerol-prolipoprotein diacylglyceryl transferase activity"/>
    <property type="evidence" value="ECO:0007669"/>
    <property type="project" value="UniProtKB-UniRule"/>
</dbReference>
<dbReference type="GO" id="GO:0042158">
    <property type="term" value="P:lipoprotein biosynthetic process"/>
    <property type="evidence" value="ECO:0007669"/>
    <property type="project" value="UniProtKB-UniRule"/>
</dbReference>
<dbReference type="HAMAP" id="MF_01147">
    <property type="entry name" value="Lgt"/>
    <property type="match status" value="1"/>
</dbReference>
<dbReference type="InterPro" id="IPR001640">
    <property type="entry name" value="Lgt"/>
</dbReference>
<dbReference type="NCBIfam" id="TIGR00544">
    <property type="entry name" value="lgt"/>
    <property type="match status" value="1"/>
</dbReference>
<dbReference type="PANTHER" id="PTHR30589:SF0">
    <property type="entry name" value="PHOSPHATIDYLGLYCEROL--PROLIPOPROTEIN DIACYLGLYCERYL TRANSFERASE"/>
    <property type="match status" value="1"/>
</dbReference>
<dbReference type="PANTHER" id="PTHR30589">
    <property type="entry name" value="PROLIPOPROTEIN DIACYLGLYCERYL TRANSFERASE"/>
    <property type="match status" value="1"/>
</dbReference>
<dbReference type="Pfam" id="PF01790">
    <property type="entry name" value="LGT"/>
    <property type="match status" value="1"/>
</dbReference>
<dbReference type="PROSITE" id="PS01311">
    <property type="entry name" value="LGT"/>
    <property type="match status" value="1"/>
</dbReference>
<organism>
    <name type="scientific">Burkholderia thailandensis (strain ATCC 700388 / DSM 13276 / CCUG 48851 / CIP 106301 / E264)</name>
    <dbReference type="NCBI Taxonomy" id="271848"/>
    <lineage>
        <taxon>Bacteria</taxon>
        <taxon>Pseudomonadati</taxon>
        <taxon>Pseudomonadota</taxon>
        <taxon>Betaproteobacteria</taxon>
        <taxon>Burkholderiales</taxon>
        <taxon>Burkholderiaceae</taxon>
        <taxon>Burkholderia</taxon>
        <taxon>pseudomallei group</taxon>
    </lineage>
</organism>
<name>LGT_BURTA</name>
<keyword id="KW-0997">Cell inner membrane</keyword>
<keyword id="KW-1003">Cell membrane</keyword>
<keyword id="KW-0472">Membrane</keyword>
<keyword id="KW-0808">Transferase</keyword>
<keyword id="KW-0812">Transmembrane</keyword>
<keyword id="KW-1133">Transmembrane helix</keyword>
<comment type="function">
    <text evidence="1">Catalyzes the transfer of the diacylglyceryl group from phosphatidylglycerol to the sulfhydryl group of the N-terminal cysteine of a prolipoprotein, the first step in the formation of mature lipoproteins.</text>
</comment>
<comment type="catalytic activity">
    <reaction evidence="1">
        <text>L-cysteinyl-[prolipoprotein] + a 1,2-diacyl-sn-glycero-3-phospho-(1'-sn-glycerol) = an S-1,2-diacyl-sn-glyceryl-L-cysteinyl-[prolipoprotein] + sn-glycerol 1-phosphate + H(+)</text>
        <dbReference type="Rhea" id="RHEA:56712"/>
        <dbReference type="Rhea" id="RHEA-COMP:14679"/>
        <dbReference type="Rhea" id="RHEA-COMP:14680"/>
        <dbReference type="ChEBI" id="CHEBI:15378"/>
        <dbReference type="ChEBI" id="CHEBI:29950"/>
        <dbReference type="ChEBI" id="CHEBI:57685"/>
        <dbReference type="ChEBI" id="CHEBI:64716"/>
        <dbReference type="ChEBI" id="CHEBI:140658"/>
        <dbReference type="EC" id="2.5.1.145"/>
    </reaction>
</comment>
<comment type="pathway">
    <text evidence="1">Protein modification; lipoprotein biosynthesis (diacylglyceryl transfer).</text>
</comment>
<comment type="subcellular location">
    <subcellularLocation>
        <location evidence="1">Cell inner membrane</location>
        <topology evidence="1">Multi-pass membrane protein</topology>
    </subcellularLocation>
</comment>
<comment type="similarity">
    <text evidence="1">Belongs to the Lgt family.</text>
</comment>
<gene>
    <name evidence="1" type="primary">lgt</name>
    <name type="ordered locus">BTH_I0829</name>
</gene>
<evidence type="ECO:0000255" key="1">
    <source>
        <dbReference type="HAMAP-Rule" id="MF_01147"/>
    </source>
</evidence>